<reference key="1">
    <citation type="journal article" date="2019" name="Toxins">
        <title>The diversified O-superfamily in Californiconus californicus presents a conotoxin with antimycobacterial activity.</title>
        <authorList>
            <person name="Bernaldez-Sarabia J."/>
            <person name="Figueroa-Montiel A."/>
            <person name="Duenas S."/>
            <person name="Cervantes-Luevano K."/>
            <person name="Beltran J.A."/>
            <person name="Ortiz E."/>
            <person name="Jimenez S."/>
            <person name="Possani L.D."/>
            <person name="Paniagua-Solis J.F."/>
            <person name="Gonzalez-Canudas J."/>
            <person name="Licea-Navarro A."/>
        </authorList>
    </citation>
    <scope>NUCLEOTIDE SEQUENCE [MRNA]</scope>
    <source>
        <tissue>Venom duct</tissue>
    </source>
</reference>
<proteinExistence type="inferred from homology"/>
<feature type="signal peptide" evidence="1">
    <location>
        <begin position="1"/>
        <end position="20"/>
    </location>
</feature>
<feature type="peptide" id="PRO_0000450988" description="Contryphan-Cal1">
    <location>
        <begin position="21"/>
        <end position="39"/>
    </location>
</feature>
<feature type="disulfide bond" evidence="3">
    <location>
        <begin position="29"/>
        <end position="35"/>
    </location>
</feature>
<dbReference type="GO" id="GO:0005576">
    <property type="term" value="C:extracellular region"/>
    <property type="evidence" value="ECO:0007669"/>
    <property type="project" value="UniProtKB-SubCell"/>
</dbReference>
<dbReference type="GO" id="GO:0090729">
    <property type="term" value="F:toxin activity"/>
    <property type="evidence" value="ECO:0007669"/>
    <property type="project" value="UniProtKB-KW"/>
</dbReference>
<keyword id="KW-1015">Disulfide bond</keyword>
<keyword id="KW-0528">Neurotoxin</keyword>
<keyword id="KW-0964">Secreted</keyword>
<keyword id="KW-0732">Signal</keyword>
<keyword id="KW-0800">Toxin</keyword>
<organism>
    <name type="scientific">Californiconus californicus</name>
    <name type="common">California cone</name>
    <name type="synonym">Conus californicus</name>
    <dbReference type="NCBI Taxonomy" id="1736779"/>
    <lineage>
        <taxon>Eukaryota</taxon>
        <taxon>Metazoa</taxon>
        <taxon>Spiralia</taxon>
        <taxon>Lophotrochozoa</taxon>
        <taxon>Mollusca</taxon>
        <taxon>Gastropoda</taxon>
        <taxon>Caenogastropoda</taxon>
        <taxon>Neogastropoda</taxon>
        <taxon>Conoidea</taxon>
        <taxon>Conidae</taxon>
        <taxon>Californiconus</taxon>
    </lineage>
</organism>
<comment type="function">
    <text evidence="3">Probable neurotoxin.</text>
</comment>
<comment type="subcellular location">
    <subcellularLocation>
        <location evidence="4">Secreted</location>
    </subcellularLocation>
</comment>
<comment type="tissue specificity">
    <text evidence="4">Expressed by the venom duct.</text>
</comment>
<comment type="domain">
    <text evidence="3">The cysteine framework is C-C.</text>
</comment>
<evidence type="ECO:0000255" key="1"/>
<evidence type="ECO:0000303" key="2">
    <source>
    </source>
</evidence>
<evidence type="ECO:0000305" key="3"/>
<evidence type="ECO:0000305" key="4">
    <source>
    </source>
</evidence>
<sequence>MTRTAVLLLTLLFLVAMAASDKIKTREVCWTEEECENWE</sequence>
<accession>P0DUA6</accession>
<protein>
    <recommendedName>
        <fullName evidence="3">Contryphan-Cal1</fullName>
    </recommendedName>
    <alternativeName>
        <fullName evidence="2">O3_contryphan-like cal1</fullName>
    </alternativeName>
</protein>
<name>COW1_CONCL</name>